<organism>
    <name type="scientific">Atropa belladonna</name>
    <name type="common">Belladonna</name>
    <name type="synonym">Deadly nightshade</name>
    <dbReference type="NCBI Taxonomy" id="33113"/>
    <lineage>
        <taxon>Eukaryota</taxon>
        <taxon>Viridiplantae</taxon>
        <taxon>Streptophyta</taxon>
        <taxon>Embryophyta</taxon>
        <taxon>Tracheophyta</taxon>
        <taxon>Spermatophyta</taxon>
        <taxon>Magnoliopsida</taxon>
        <taxon>eudicotyledons</taxon>
        <taxon>Gunneridae</taxon>
        <taxon>Pentapetalae</taxon>
        <taxon>asterids</taxon>
        <taxon>lamiids</taxon>
        <taxon>Solanales</taxon>
        <taxon>Solanaceae</taxon>
        <taxon>Solanoideae</taxon>
        <taxon>Hyoscyameae</taxon>
        <taxon>Atropa</taxon>
    </lineage>
</organism>
<accession>Q8S8V4</accession>
<geneLocation type="chloroplast"/>
<gene>
    <name type="primary">rpl22</name>
</gene>
<dbReference type="EMBL" id="AJ316582">
    <property type="protein sequence ID" value="CAC88083.1"/>
    <property type="molecule type" value="Genomic_DNA"/>
</dbReference>
<dbReference type="RefSeq" id="NP_783270.1">
    <property type="nucleotide sequence ID" value="NC_004561.1"/>
</dbReference>
<dbReference type="SMR" id="Q8S8V4"/>
<dbReference type="GeneID" id="806561"/>
<dbReference type="GO" id="GO:0009507">
    <property type="term" value="C:chloroplast"/>
    <property type="evidence" value="ECO:0007669"/>
    <property type="project" value="UniProtKB-SubCell"/>
</dbReference>
<dbReference type="GO" id="GO:0015934">
    <property type="term" value="C:large ribosomal subunit"/>
    <property type="evidence" value="ECO:0007669"/>
    <property type="project" value="InterPro"/>
</dbReference>
<dbReference type="GO" id="GO:0019843">
    <property type="term" value="F:rRNA binding"/>
    <property type="evidence" value="ECO:0007669"/>
    <property type="project" value="UniProtKB-UniRule"/>
</dbReference>
<dbReference type="GO" id="GO:0003735">
    <property type="term" value="F:structural constituent of ribosome"/>
    <property type="evidence" value="ECO:0007669"/>
    <property type="project" value="InterPro"/>
</dbReference>
<dbReference type="GO" id="GO:0006412">
    <property type="term" value="P:translation"/>
    <property type="evidence" value="ECO:0007669"/>
    <property type="project" value="UniProtKB-UniRule"/>
</dbReference>
<dbReference type="CDD" id="cd00336">
    <property type="entry name" value="Ribosomal_L22"/>
    <property type="match status" value="1"/>
</dbReference>
<dbReference type="FunFam" id="3.90.470.10:FF:000006">
    <property type="entry name" value="50S ribosomal protein L22, chloroplastic"/>
    <property type="match status" value="1"/>
</dbReference>
<dbReference type="Gene3D" id="3.90.470.10">
    <property type="entry name" value="Ribosomal protein L22/L17"/>
    <property type="match status" value="1"/>
</dbReference>
<dbReference type="HAMAP" id="MF_01331_B">
    <property type="entry name" value="Ribosomal_uL22_B"/>
    <property type="match status" value="1"/>
</dbReference>
<dbReference type="InterPro" id="IPR001063">
    <property type="entry name" value="Ribosomal_uL22"/>
</dbReference>
<dbReference type="InterPro" id="IPR005727">
    <property type="entry name" value="Ribosomal_uL22_bac/chlpt-type"/>
</dbReference>
<dbReference type="InterPro" id="IPR047867">
    <property type="entry name" value="Ribosomal_uL22_bac/org-type"/>
</dbReference>
<dbReference type="InterPro" id="IPR018260">
    <property type="entry name" value="Ribosomal_uL22_CS"/>
</dbReference>
<dbReference type="InterPro" id="IPR036394">
    <property type="entry name" value="Ribosomal_uL22_sf"/>
</dbReference>
<dbReference type="NCBIfam" id="TIGR01044">
    <property type="entry name" value="rplV_bact"/>
    <property type="match status" value="1"/>
</dbReference>
<dbReference type="PANTHER" id="PTHR13501">
    <property type="entry name" value="CHLOROPLAST 50S RIBOSOMAL PROTEIN L22-RELATED"/>
    <property type="match status" value="1"/>
</dbReference>
<dbReference type="PANTHER" id="PTHR13501:SF10">
    <property type="entry name" value="LARGE RIBOSOMAL SUBUNIT PROTEIN UL22M"/>
    <property type="match status" value="1"/>
</dbReference>
<dbReference type="Pfam" id="PF00237">
    <property type="entry name" value="Ribosomal_L22"/>
    <property type="match status" value="1"/>
</dbReference>
<dbReference type="SUPFAM" id="SSF54843">
    <property type="entry name" value="Ribosomal protein L22"/>
    <property type="match status" value="1"/>
</dbReference>
<dbReference type="PROSITE" id="PS00464">
    <property type="entry name" value="RIBOSOMAL_L22"/>
    <property type="match status" value="1"/>
</dbReference>
<feature type="chain" id="PRO_0000125298" description="Large ribosomal subunit protein uL22c">
    <location>
        <begin position="1"/>
        <end position="155"/>
    </location>
</feature>
<keyword id="KW-0150">Chloroplast</keyword>
<keyword id="KW-0934">Plastid</keyword>
<keyword id="KW-0687">Ribonucleoprotein</keyword>
<keyword id="KW-0689">Ribosomal protein</keyword>
<keyword id="KW-0694">RNA-binding</keyword>
<keyword id="KW-0699">rRNA-binding</keyword>
<evidence type="ECO:0000250" key="1"/>
<evidence type="ECO:0000305" key="2"/>
<protein>
    <recommendedName>
        <fullName evidence="2">Large ribosomal subunit protein uL22c</fullName>
    </recommendedName>
    <alternativeName>
        <fullName>50S ribosomal protein L22, chloroplastic</fullName>
    </alternativeName>
</protein>
<reference key="1">
    <citation type="journal article" date="2002" name="Mol. Biol. Evol.">
        <title>The plastid chromosome of Atropa belladonna and its comparison with that of Nicotiana tabacum: the role of RNA editing in generating divergence in the process of plant speciation.</title>
        <authorList>
            <person name="Schmitz-Linneweber C."/>
            <person name="Regel R."/>
            <person name="Du T.G."/>
            <person name="Hupfer H."/>
            <person name="Herrmann R.G."/>
            <person name="Maier R.M."/>
        </authorList>
    </citation>
    <scope>NUCLEOTIDE SEQUENCE [LARGE SCALE GENOMIC DNA]</scope>
    <source>
        <strain>cv. Ab5p(kan)</strain>
    </source>
</reference>
<sequence length="155" mass="17690">MLKKKKTEVYALGEHISMSADKARRVIDQIRGRSYEETLMILELMPYRACYPILKLVYSAAANASYNMGSSEANLVISKAEVNGGTTVKKLKPRARGRSFPIKRSTCHITIVMKDISLNDEYVKMNSLKKTRWKKKSTAMTYHDMYNSGGLWDKK</sequence>
<comment type="function">
    <text evidence="1">This protein binds specifically to 23S rRNA.</text>
</comment>
<comment type="function">
    <text evidence="1">The globular domain of the protein is located near the polypeptide exit tunnel on the outside of the subunit, while an extended beta-hairpin is found that lines the wall of the exit tunnel in the center of the 70S ribosome.</text>
</comment>
<comment type="subunit">
    <text evidence="1">Part of the 50S ribosomal subunit.</text>
</comment>
<comment type="subcellular location">
    <subcellularLocation>
        <location>Plastid</location>
        <location>Chloroplast</location>
    </subcellularLocation>
</comment>
<comment type="similarity">
    <text evidence="2">Belongs to the universal ribosomal protein uL22 family.</text>
</comment>
<name>RK22_ATRBE</name>
<proteinExistence type="inferred from homology"/>